<reference key="1">
    <citation type="journal article" date="2008" name="PLoS ONE">
        <title>Genome sequence of the saprophyte Leptospira biflexa provides insights into the evolution of Leptospira and the pathogenesis of leptospirosis.</title>
        <authorList>
            <person name="Picardeau M."/>
            <person name="Bulach D.M."/>
            <person name="Bouchier C."/>
            <person name="Zuerner R.L."/>
            <person name="Zidane N."/>
            <person name="Wilson P.J."/>
            <person name="Creno S."/>
            <person name="Kuczek E.S."/>
            <person name="Bommezzadri S."/>
            <person name="Davis J.C."/>
            <person name="McGrath A."/>
            <person name="Johnson M.J."/>
            <person name="Boursaux-Eude C."/>
            <person name="Seemann T."/>
            <person name="Rouy Z."/>
            <person name="Coppel R.L."/>
            <person name="Rood J.I."/>
            <person name="Lajus A."/>
            <person name="Davies J.K."/>
            <person name="Medigue C."/>
            <person name="Adler B."/>
        </authorList>
    </citation>
    <scope>NUCLEOTIDE SEQUENCE [LARGE SCALE GENOMIC DNA]</scope>
    <source>
        <strain>Patoc 1 / Ames</strain>
    </source>
</reference>
<organism>
    <name type="scientific">Leptospira biflexa serovar Patoc (strain Patoc 1 / Ames)</name>
    <dbReference type="NCBI Taxonomy" id="355278"/>
    <lineage>
        <taxon>Bacteria</taxon>
        <taxon>Pseudomonadati</taxon>
        <taxon>Spirochaetota</taxon>
        <taxon>Spirochaetia</taxon>
        <taxon>Leptospirales</taxon>
        <taxon>Leptospiraceae</taxon>
        <taxon>Leptospira</taxon>
    </lineage>
</organism>
<accession>B0SEC2</accession>
<sequence>MTKRASQTGNSREKLHCSFCGKAQDEVRRLVAGPGVYICDECISLCNEIIAEEPQSGEKTAIVGDIPKPTEIKKILDQYVIGQEQAKKALAVAVYNHYKRIFHNERKAGDVELEKSNIMLIGPTGSGKTLLAQTLARILKVPFAIVDATALTEAGYVGEDVENIILKLIQNADNDVKRAEMGIIYIDEIDKISRKSDSASITRDVSGEGVQQALLKIIEGTVANVPPQGGRKHPHQEYIPVETKNILFICGGAFVGLTDIIKQRVGVKSIGFHSNEVVNDRGRKIEEGESLVHHVIPDDLMKFGLIPEFIGRLPIIATLDELTIESLKSIFTEPKNSLLKQYQKMFDIENVKLKFTESAIEAIAQTAIKRESGARGLRAIVEEIMMELMFQIPSRKDVLEVVVTDDTVLKKEAPITILKGDIEKIA</sequence>
<dbReference type="EMBL" id="CP000777">
    <property type="protein sequence ID" value="ABZ93465.1"/>
    <property type="molecule type" value="Genomic_DNA"/>
</dbReference>
<dbReference type="RefSeq" id="WP_012387976.1">
    <property type="nucleotide sequence ID" value="NC_010842.1"/>
</dbReference>
<dbReference type="SMR" id="B0SEC2"/>
<dbReference type="KEGG" id="lbf:LBF_0938"/>
<dbReference type="HOGENOM" id="CLU_014218_8_2_12"/>
<dbReference type="GO" id="GO:0009376">
    <property type="term" value="C:HslUV protease complex"/>
    <property type="evidence" value="ECO:0007669"/>
    <property type="project" value="TreeGrafter"/>
</dbReference>
<dbReference type="GO" id="GO:0005524">
    <property type="term" value="F:ATP binding"/>
    <property type="evidence" value="ECO:0007669"/>
    <property type="project" value="UniProtKB-UniRule"/>
</dbReference>
<dbReference type="GO" id="GO:0016887">
    <property type="term" value="F:ATP hydrolysis activity"/>
    <property type="evidence" value="ECO:0007669"/>
    <property type="project" value="InterPro"/>
</dbReference>
<dbReference type="GO" id="GO:0140662">
    <property type="term" value="F:ATP-dependent protein folding chaperone"/>
    <property type="evidence" value="ECO:0007669"/>
    <property type="project" value="InterPro"/>
</dbReference>
<dbReference type="GO" id="GO:0046983">
    <property type="term" value="F:protein dimerization activity"/>
    <property type="evidence" value="ECO:0007669"/>
    <property type="project" value="InterPro"/>
</dbReference>
<dbReference type="GO" id="GO:0051082">
    <property type="term" value="F:unfolded protein binding"/>
    <property type="evidence" value="ECO:0007669"/>
    <property type="project" value="UniProtKB-UniRule"/>
</dbReference>
<dbReference type="GO" id="GO:0008270">
    <property type="term" value="F:zinc ion binding"/>
    <property type="evidence" value="ECO:0007669"/>
    <property type="project" value="InterPro"/>
</dbReference>
<dbReference type="GO" id="GO:0051301">
    <property type="term" value="P:cell division"/>
    <property type="evidence" value="ECO:0007669"/>
    <property type="project" value="TreeGrafter"/>
</dbReference>
<dbReference type="GO" id="GO:0051603">
    <property type="term" value="P:proteolysis involved in protein catabolic process"/>
    <property type="evidence" value="ECO:0007669"/>
    <property type="project" value="TreeGrafter"/>
</dbReference>
<dbReference type="CDD" id="cd19497">
    <property type="entry name" value="RecA-like_ClpX"/>
    <property type="match status" value="1"/>
</dbReference>
<dbReference type="FunFam" id="1.10.8.60:FF:000002">
    <property type="entry name" value="ATP-dependent Clp protease ATP-binding subunit ClpX"/>
    <property type="match status" value="1"/>
</dbReference>
<dbReference type="FunFam" id="3.40.50.300:FF:000005">
    <property type="entry name" value="ATP-dependent Clp protease ATP-binding subunit ClpX"/>
    <property type="match status" value="1"/>
</dbReference>
<dbReference type="Gene3D" id="1.10.8.60">
    <property type="match status" value="1"/>
</dbReference>
<dbReference type="Gene3D" id="6.20.220.10">
    <property type="entry name" value="ClpX chaperone, C4-type zinc finger domain"/>
    <property type="match status" value="1"/>
</dbReference>
<dbReference type="Gene3D" id="3.40.50.300">
    <property type="entry name" value="P-loop containing nucleotide triphosphate hydrolases"/>
    <property type="match status" value="1"/>
</dbReference>
<dbReference type="HAMAP" id="MF_00175">
    <property type="entry name" value="ClpX"/>
    <property type="match status" value="1"/>
</dbReference>
<dbReference type="InterPro" id="IPR003593">
    <property type="entry name" value="AAA+_ATPase"/>
</dbReference>
<dbReference type="InterPro" id="IPR050052">
    <property type="entry name" value="ATP-dep_Clp_protease_ClpX"/>
</dbReference>
<dbReference type="InterPro" id="IPR003959">
    <property type="entry name" value="ATPase_AAA_core"/>
</dbReference>
<dbReference type="InterPro" id="IPR019489">
    <property type="entry name" value="Clp_ATPase_C"/>
</dbReference>
<dbReference type="InterPro" id="IPR004487">
    <property type="entry name" value="Clp_protease_ATP-bd_su_ClpX"/>
</dbReference>
<dbReference type="InterPro" id="IPR046425">
    <property type="entry name" value="ClpX_bact"/>
</dbReference>
<dbReference type="InterPro" id="IPR027417">
    <property type="entry name" value="P-loop_NTPase"/>
</dbReference>
<dbReference type="InterPro" id="IPR010603">
    <property type="entry name" value="Znf_CppX_C4"/>
</dbReference>
<dbReference type="InterPro" id="IPR038366">
    <property type="entry name" value="Znf_CppX_C4_sf"/>
</dbReference>
<dbReference type="NCBIfam" id="TIGR00382">
    <property type="entry name" value="clpX"/>
    <property type="match status" value="1"/>
</dbReference>
<dbReference type="NCBIfam" id="NF003745">
    <property type="entry name" value="PRK05342.1"/>
    <property type="match status" value="1"/>
</dbReference>
<dbReference type="PANTHER" id="PTHR48102:SF7">
    <property type="entry name" value="ATP-DEPENDENT CLP PROTEASE ATP-BINDING SUBUNIT CLPX-LIKE, MITOCHONDRIAL"/>
    <property type="match status" value="1"/>
</dbReference>
<dbReference type="PANTHER" id="PTHR48102">
    <property type="entry name" value="ATP-DEPENDENT CLP PROTEASE ATP-BINDING SUBUNIT CLPX-LIKE, MITOCHONDRIAL-RELATED"/>
    <property type="match status" value="1"/>
</dbReference>
<dbReference type="Pfam" id="PF07724">
    <property type="entry name" value="AAA_2"/>
    <property type="match status" value="1"/>
</dbReference>
<dbReference type="Pfam" id="PF10431">
    <property type="entry name" value="ClpB_D2-small"/>
    <property type="match status" value="1"/>
</dbReference>
<dbReference type="Pfam" id="PF06689">
    <property type="entry name" value="zf-C4_ClpX"/>
    <property type="match status" value="1"/>
</dbReference>
<dbReference type="SMART" id="SM00382">
    <property type="entry name" value="AAA"/>
    <property type="match status" value="1"/>
</dbReference>
<dbReference type="SMART" id="SM01086">
    <property type="entry name" value="ClpB_D2-small"/>
    <property type="match status" value="1"/>
</dbReference>
<dbReference type="SMART" id="SM00994">
    <property type="entry name" value="zf-C4_ClpX"/>
    <property type="match status" value="1"/>
</dbReference>
<dbReference type="SUPFAM" id="SSF57716">
    <property type="entry name" value="Glucocorticoid receptor-like (DNA-binding domain)"/>
    <property type="match status" value="1"/>
</dbReference>
<dbReference type="SUPFAM" id="SSF52540">
    <property type="entry name" value="P-loop containing nucleoside triphosphate hydrolases"/>
    <property type="match status" value="1"/>
</dbReference>
<dbReference type="PROSITE" id="PS51902">
    <property type="entry name" value="CLPX_ZB"/>
    <property type="match status" value="1"/>
</dbReference>
<proteinExistence type="inferred from homology"/>
<evidence type="ECO:0000255" key="1">
    <source>
        <dbReference type="HAMAP-Rule" id="MF_00175"/>
    </source>
</evidence>
<evidence type="ECO:0000255" key="2">
    <source>
        <dbReference type="PROSITE-ProRule" id="PRU01250"/>
    </source>
</evidence>
<protein>
    <recommendedName>
        <fullName evidence="1">ATP-dependent Clp protease ATP-binding subunit ClpX</fullName>
    </recommendedName>
</protein>
<name>CLPX_LEPBA</name>
<comment type="function">
    <text evidence="1">ATP-dependent specificity component of the Clp protease. It directs the protease to specific substrates. Can perform chaperone functions in the absence of ClpP.</text>
</comment>
<comment type="subunit">
    <text evidence="1">Component of the ClpX-ClpP complex. Forms a hexameric ring that, in the presence of ATP, binds to fourteen ClpP subunits assembled into a disk-like structure with a central cavity, resembling the structure of eukaryotic proteasomes.</text>
</comment>
<comment type="similarity">
    <text evidence="1">Belongs to the ClpX chaperone family.</text>
</comment>
<gene>
    <name evidence="1" type="primary">clpX</name>
    <name type="ordered locus">LBF_0938</name>
</gene>
<keyword id="KW-0067">ATP-binding</keyword>
<keyword id="KW-0143">Chaperone</keyword>
<keyword id="KW-0479">Metal-binding</keyword>
<keyword id="KW-0547">Nucleotide-binding</keyword>
<keyword id="KW-0862">Zinc</keyword>
<feature type="chain" id="PRO_1000097962" description="ATP-dependent Clp protease ATP-binding subunit ClpX">
    <location>
        <begin position="1"/>
        <end position="426"/>
    </location>
</feature>
<feature type="domain" description="ClpX-type ZB" evidence="2">
    <location>
        <begin position="5"/>
        <end position="58"/>
    </location>
</feature>
<feature type="binding site" evidence="2">
    <location>
        <position position="17"/>
    </location>
    <ligand>
        <name>Zn(2+)</name>
        <dbReference type="ChEBI" id="CHEBI:29105"/>
    </ligand>
</feature>
<feature type="binding site" evidence="2">
    <location>
        <position position="20"/>
    </location>
    <ligand>
        <name>Zn(2+)</name>
        <dbReference type="ChEBI" id="CHEBI:29105"/>
    </ligand>
</feature>
<feature type="binding site" evidence="2">
    <location>
        <position position="39"/>
    </location>
    <ligand>
        <name>Zn(2+)</name>
        <dbReference type="ChEBI" id="CHEBI:29105"/>
    </ligand>
</feature>
<feature type="binding site" evidence="2">
    <location>
        <position position="42"/>
    </location>
    <ligand>
        <name>Zn(2+)</name>
        <dbReference type="ChEBI" id="CHEBI:29105"/>
    </ligand>
</feature>
<feature type="binding site" evidence="1">
    <location>
        <begin position="123"/>
        <end position="130"/>
    </location>
    <ligand>
        <name>ATP</name>
        <dbReference type="ChEBI" id="CHEBI:30616"/>
    </ligand>
</feature>